<gene>
    <name type="primary">EDN1</name>
</gene>
<keyword id="KW-0002">3D-structure</keyword>
<keyword id="KW-0165">Cleavage on pair of basic residues</keyword>
<keyword id="KW-0903">Direct protein sequencing</keyword>
<keyword id="KW-0225">Disease variant</keyword>
<keyword id="KW-1015">Disulfide bond</keyword>
<keyword id="KW-1267">Proteomics identification</keyword>
<keyword id="KW-1185">Reference proteome</keyword>
<keyword id="KW-0964">Secreted</keyword>
<keyword id="KW-0732">Signal</keyword>
<keyword id="KW-0838">Vasoactive</keyword>
<keyword id="KW-0839">Vasoconstrictor</keyword>
<protein>
    <recommendedName>
        <fullName>Endothelin-1</fullName>
    </recommendedName>
    <alternativeName>
        <fullName>Preproendothelin-1</fullName>
        <shortName>PPET1</shortName>
    </alternativeName>
    <component>
        <recommendedName>
            <fullName>Endothelin-1</fullName>
            <shortName>ET-1</shortName>
        </recommendedName>
    </component>
    <component>
        <recommendedName>
            <fullName>Big endothelin-1</fullName>
        </recommendedName>
    </component>
</protein>
<reference key="1">
    <citation type="journal article" date="1988" name="FEBS Lett.">
        <title>Cloning and sequence analysis of cDNA encoding the precursor of a human endothelium-derived vasoconstrictor peptide, endothelin: identity of human and porcine endothelin.</title>
        <authorList>
            <person name="Itoh Y."/>
            <person name="Yanagisawa M."/>
            <person name="Ohkubo S."/>
            <person name="Kimura C."/>
            <person name="Kosaka T."/>
            <person name="Inoue A."/>
            <person name="Ishida N."/>
            <person name="Mitsui Y."/>
            <person name="Onda H."/>
            <person name="Fujino M."/>
            <person name="Masaki T."/>
        </authorList>
    </citation>
    <scope>NUCLEOTIDE SEQUENCE [MRNA]</scope>
    <source>
        <tissue>Placenta</tissue>
    </source>
</reference>
<reference key="2">
    <citation type="journal article" date="1989" name="J. Biol. Chem.">
        <title>The human preproendothelin-1 gene. Complete nucleotide sequence and regulation of expression.</title>
        <authorList>
            <person name="Inoue A."/>
            <person name="Yanagisawa M."/>
            <person name="Takuwa Y."/>
            <person name="Mitsui Y."/>
            <person name="Kobayashi M."/>
            <person name="Masaki T."/>
        </authorList>
    </citation>
    <scope>NUCLEOTIDE SEQUENCE [GENOMIC DNA]</scope>
</reference>
<reference key="3">
    <citation type="journal article" date="1989" name="J. Biol. Chem.">
        <title>Structural organization and chromosomal assignment of the gene encoding endothelin.</title>
        <authorList>
            <person name="Bloch K.D."/>
            <person name="Friedrich S.P."/>
            <person name="Lee M.E."/>
            <person name="Eddy R.L."/>
            <person name="Shows T.B."/>
            <person name="Quertermous T."/>
        </authorList>
    </citation>
    <scope>NUCLEOTIDE SEQUENCE [GENOMIC DNA]</scope>
</reference>
<reference key="4">
    <citation type="journal article" date="1993" name="J. Clin. Invest.">
        <title>Two preproendothelin 1 mRNAs transcribed by alternative promoters.</title>
        <authorList>
            <person name="Benatti L."/>
            <person name="Bonecchi L."/>
            <person name="Cozzi L."/>
            <person name="Sarmientos P."/>
        </authorList>
    </citation>
    <scope>NUCLEOTIDE SEQUENCE [MRNA]</scope>
</reference>
<reference key="5">
    <citation type="submission" date="2003-10" db="EMBL/GenBank/DDBJ databases">
        <authorList>
            <consortium name="NIEHS SNPs program"/>
        </authorList>
    </citation>
    <scope>NUCLEOTIDE SEQUENCE [GENOMIC DNA]</scope>
    <scope>VARIANT ASN-198</scope>
</reference>
<reference key="6">
    <citation type="journal article" date="2003" name="Nature">
        <title>The DNA sequence and analysis of human chromosome 6.</title>
        <authorList>
            <person name="Mungall A.J."/>
            <person name="Palmer S.A."/>
            <person name="Sims S.K."/>
            <person name="Edwards C.A."/>
            <person name="Ashurst J.L."/>
            <person name="Wilming L."/>
            <person name="Jones M.C."/>
            <person name="Horton R."/>
            <person name="Hunt S.E."/>
            <person name="Scott C.E."/>
            <person name="Gilbert J.G.R."/>
            <person name="Clamp M.E."/>
            <person name="Bethel G."/>
            <person name="Milne S."/>
            <person name="Ainscough R."/>
            <person name="Almeida J.P."/>
            <person name="Ambrose K.D."/>
            <person name="Andrews T.D."/>
            <person name="Ashwell R.I.S."/>
            <person name="Babbage A.K."/>
            <person name="Bagguley C.L."/>
            <person name="Bailey J."/>
            <person name="Banerjee R."/>
            <person name="Barker D.J."/>
            <person name="Barlow K.F."/>
            <person name="Bates K."/>
            <person name="Beare D.M."/>
            <person name="Beasley H."/>
            <person name="Beasley O."/>
            <person name="Bird C.P."/>
            <person name="Blakey S.E."/>
            <person name="Bray-Allen S."/>
            <person name="Brook J."/>
            <person name="Brown A.J."/>
            <person name="Brown J.Y."/>
            <person name="Burford D.C."/>
            <person name="Burrill W."/>
            <person name="Burton J."/>
            <person name="Carder C."/>
            <person name="Carter N.P."/>
            <person name="Chapman J.C."/>
            <person name="Clark S.Y."/>
            <person name="Clark G."/>
            <person name="Clee C.M."/>
            <person name="Clegg S."/>
            <person name="Cobley V."/>
            <person name="Collier R.E."/>
            <person name="Collins J.E."/>
            <person name="Colman L.K."/>
            <person name="Corby N.R."/>
            <person name="Coville G.J."/>
            <person name="Culley K.M."/>
            <person name="Dhami P."/>
            <person name="Davies J."/>
            <person name="Dunn M."/>
            <person name="Earthrowl M.E."/>
            <person name="Ellington A.E."/>
            <person name="Evans K.A."/>
            <person name="Faulkner L."/>
            <person name="Francis M.D."/>
            <person name="Frankish A."/>
            <person name="Frankland J."/>
            <person name="French L."/>
            <person name="Garner P."/>
            <person name="Garnett J."/>
            <person name="Ghori M.J."/>
            <person name="Gilby L.M."/>
            <person name="Gillson C.J."/>
            <person name="Glithero R.J."/>
            <person name="Grafham D.V."/>
            <person name="Grant M."/>
            <person name="Gribble S."/>
            <person name="Griffiths C."/>
            <person name="Griffiths M.N.D."/>
            <person name="Hall R."/>
            <person name="Halls K.S."/>
            <person name="Hammond S."/>
            <person name="Harley J.L."/>
            <person name="Hart E.A."/>
            <person name="Heath P.D."/>
            <person name="Heathcott R."/>
            <person name="Holmes S.J."/>
            <person name="Howden P.J."/>
            <person name="Howe K.L."/>
            <person name="Howell G.R."/>
            <person name="Huckle E."/>
            <person name="Humphray S.J."/>
            <person name="Humphries M.D."/>
            <person name="Hunt A.R."/>
            <person name="Johnson C.M."/>
            <person name="Joy A.A."/>
            <person name="Kay M."/>
            <person name="Keenan S.J."/>
            <person name="Kimberley A.M."/>
            <person name="King A."/>
            <person name="Laird G.K."/>
            <person name="Langford C."/>
            <person name="Lawlor S."/>
            <person name="Leongamornlert D.A."/>
            <person name="Leversha M."/>
            <person name="Lloyd C.R."/>
            <person name="Lloyd D.M."/>
            <person name="Loveland J.E."/>
            <person name="Lovell J."/>
            <person name="Martin S."/>
            <person name="Mashreghi-Mohammadi M."/>
            <person name="Maslen G.L."/>
            <person name="Matthews L."/>
            <person name="McCann O.T."/>
            <person name="McLaren S.J."/>
            <person name="McLay K."/>
            <person name="McMurray A."/>
            <person name="Moore M.J.F."/>
            <person name="Mullikin J.C."/>
            <person name="Niblett D."/>
            <person name="Nickerson T."/>
            <person name="Novik K.L."/>
            <person name="Oliver K."/>
            <person name="Overton-Larty E.K."/>
            <person name="Parker A."/>
            <person name="Patel R."/>
            <person name="Pearce A.V."/>
            <person name="Peck A.I."/>
            <person name="Phillimore B.J.C.T."/>
            <person name="Phillips S."/>
            <person name="Plumb R.W."/>
            <person name="Porter K.M."/>
            <person name="Ramsey Y."/>
            <person name="Ranby S.A."/>
            <person name="Rice C.M."/>
            <person name="Ross M.T."/>
            <person name="Searle S.M."/>
            <person name="Sehra H.K."/>
            <person name="Sheridan E."/>
            <person name="Skuce C.D."/>
            <person name="Smith S."/>
            <person name="Smith M."/>
            <person name="Spraggon L."/>
            <person name="Squares S.L."/>
            <person name="Steward C.A."/>
            <person name="Sycamore N."/>
            <person name="Tamlyn-Hall G."/>
            <person name="Tester J."/>
            <person name="Theaker A.J."/>
            <person name="Thomas D.W."/>
            <person name="Thorpe A."/>
            <person name="Tracey A."/>
            <person name="Tromans A."/>
            <person name="Tubby B."/>
            <person name="Wall M."/>
            <person name="Wallis J.M."/>
            <person name="West A.P."/>
            <person name="White S.S."/>
            <person name="Whitehead S.L."/>
            <person name="Whittaker H."/>
            <person name="Wild A."/>
            <person name="Willey D.J."/>
            <person name="Wilmer T.E."/>
            <person name="Wood J.M."/>
            <person name="Wray P.W."/>
            <person name="Wyatt J.C."/>
            <person name="Young L."/>
            <person name="Younger R.M."/>
            <person name="Bentley D.R."/>
            <person name="Coulson A."/>
            <person name="Durbin R.M."/>
            <person name="Hubbard T."/>
            <person name="Sulston J.E."/>
            <person name="Dunham I."/>
            <person name="Rogers J."/>
            <person name="Beck S."/>
        </authorList>
    </citation>
    <scope>NUCLEOTIDE SEQUENCE [LARGE SCALE GENOMIC DNA]</scope>
</reference>
<reference key="7">
    <citation type="journal article" date="2004" name="Genome Res.">
        <title>The status, quality, and expansion of the NIH full-length cDNA project: the Mammalian Gene Collection (MGC).</title>
        <authorList>
            <consortium name="The MGC Project Team"/>
        </authorList>
    </citation>
    <scope>NUCLEOTIDE SEQUENCE [LARGE SCALE MRNA]</scope>
    <scope>VARIANT ASN-198</scope>
    <source>
        <tissue>Pancreas</tissue>
    </source>
</reference>
<reference key="8">
    <citation type="journal article" date="1989" name="Proc. Natl. Acad. Sci. U.S.A.">
        <title>The human endothelin family: three structurally and pharmacologically distinct isopeptides predicted by three separate genes.</title>
        <authorList>
            <person name="Inoue A."/>
            <person name="Yanagisawa M."/>
            <person name="Kimura S."/>
            <person name="Kasuya Y."/>
            <person name="Miyauchi T."/>
            <person name="Goto K."/>
            <person name="Masaki T."/>
        </authorList>
    </citation>
    <scope>NUCLEOTIDE SEQUENCE [GENOMIC DNA] OF 27-67</scope>
</reference>
<reference key="9">
    <citation type="journal article" date="1999" name="Blood">
        <title>Proteolytic processing of big endothelin-3 by the kell blood group protein.</title>
        <authorList>
            <person name="Lee S."/>
            <person name="Lin M."/>
            <person name="Mele A."/>
            <person name="Cao Y."/>
            <person name="Farmar J."/>
            <person name="Russo D."/>
            <person name="Redman C."/>
        </authorList>
    </citation>
    <scope>PARTIAL PROTEIN SEQUENCE</scope>
    <scope>CLEAVAGE BY KEL</scope>
    <scope>IDENTIFICATION BY MASS SPECTROMETRY</scope>
</reference>
<reference key="10">
    <citation type="journal article" date="1991" name="FEBS Lett.">
        <title>The signal peptide of human preproendothelin-1.</title>
        <authorList>
            <person name="Fabbrini M.S."/>
            <person name="Valsasina B."/>
            <person name="Nitti G."/>
            <person name="Benatti L."/>
            <person name="Vitale A."/>
        </authorList>
    </citation>
    <scope>PROTEOLYTIC PROCESSING</scope>
</reference>
<reference key="11">
    <citation type="journal article" date="1997" name="J. Clin. Endocrinol. Metab.">
        <title>Endothelin-1 and ETA receptor expression in vascular smooth muscle cells from human placenta: a new ETA receptor messenger ribonucleic acid is generated by alternative splicing of exon 3.</title>
        <authorList>
            <person name="Bourgeois C."/>
            <person name="Robert B."/>
            <person name="Rebourcet R."/>
            <person name="Mondon F."/>
            <person name="Mignot T.-M."/>
            <person name="Duc-Goiran P."/>
            <person name="Ferre F."/>
        </authorList>
    </citation>
    <scope>TISSUE SPECIFICITY</scope>
</reference>
<reference key="12">
    <citation type="journal article" date="2007" name="Circ. Res.">
        <title>Association of ATP1A1 and dear single-nucleotide polymorphism haplotypes with essential hypertension: sex-specific and haplotype-specific effects.</title>
        <authorList>
            <person name="Glorioso N."/>
            <person name="Herrera V.L."/>
            <person name="Bagamasbad P."/>
            <person name="Filigheddu F."/>
            <person name="Troffa C."/>
            <person name="Argiolas G."/>
            <person name="Bulla E."/>
            <person name="Decano J.L."/>
            <person name="Ruiz-Opazo N."/>
        </authorList>
    </citation>
    <scope>FUNCTION</scope>
</reference>
<reference key="13">
    <citation type="journal article" date="2007" name="Am. J. Hum. Genet.">
        <title>Genetic analysis of 103 candidate genes for coronary artery disease and associated phenotypes in a founder population reveals a new association between endothelin-1 and high-density lipoprotein cholesterol.</title>
        <authorList>
            <person name="Pare G."/>
            <person name="Serre D."/>
            <person name="Brisson D."/>
            <person name="Anand S.S."/>
            <person name="Montpetit A."/>
            <person name="Tremblay G."/>
            <person name="Engert J.C."/>
            <person name="Hudson T.J."/>
            <person name="Gaudet D."/>
        </authorList>
    </citation>
    <scope>VARIANT ASN-198</scope>
    <scope>CHARACTERIZATION OF VARIANT ASN-198</scope>
</reference>
<reference key="14">
    <citation type="journal article" date="2008" name="Hum. Genet.">
        <title>Investigating the association between K198N coding polymorphism in EDN1 and hypertension, lipoprotein levels, the metabolic syndrome and cardiovascular disease.</title>
        <authorList>
            <person name="Wiltshire S."/>
            <person name="Powell B.L."/>
            <person name="Jennens M."/>
            <person name="McCaskie P.A."/>
            <person name="Carter K.W."/>
            <person name="Palmer L.J."/>
            <person name="Thompson P.L."/>
            <person name="McQuillan B.M."/>
            <person name="Hung J."/>
            <person name="Beilby J.P."/>
        </authorList>
    </citation>
    <scope>VARIANT ASN-198</scope>
</reference>
<reference key="15">
    <citation type="journal article" date="2009" name="J. Cell. Physiol.">
        <title>Pyk2 mediates endothelin-1 signaling via p130Cas/BCAR3 cascade and regulates human glomerular mesangial cell adhesion and spreading.</title>
        <authorList>
            <person name="Rufanova V.A."/>
            <person name="Alexanian A."/>
            <person name="Wakatsuki T."/>
            <person name="Lerner A."/>
            <person name="Sorokin A."/>
        </authorList>
    </citation>
    <scope>FUNCTION</scope>
</reference>
<reference key="16">
    <citation type="journal article" date="1992" name="Acta Crystallogr. B">
        <title>Crystallization and preliminary X-ray analysis of human endothelin.</title>
        <authorList>
            <person name="Wolff M."/>
            <person name="Day J."/>
            <person name="Greenwood A."/>
            <person name="Larson S."/>
            <person name="McPherson A."/>
        </authorList>
    </citation>
    <scope>X-RAY CRYSTALLOGRAPHY (1.8 ANGSTROMS) OF ET-1</scope>
</reference>
<reference key="17">
    <citation type="journal article" date="1994" name="Nat. Struct. Biol.">
        <title>The crystal structure of human endothelin.</title>
        <authorList>
            <person name="Janes R.W."/>
            <person name="Peapus D.H."/>
            <person name="Wallace B.A."/>
        </authorList>
    </citation>
    <scope>X-RAY CRYSTALLOGRAPHY (2.18 ANGSTROMS) OF ET-1</scope>
    <scope>DISULFIDE BONDS</scope>
</reference>
<reference key="18">
    <citation type="journal article" date="1991" name="Biochem. Biophys. Res. Commun.">
        <title>The conformation of endothelin-1 in aqueous solution: NMR-derived constraints combined with distance geometry and molecular dynamics calculations.</title>
        <authorList>
            <person name="Reily M.D."/>
            <person name="Dunbar J.B. Jr."/>
        </authorList>
    </citation>
    <scope>STRUCTURE BY NMR OF ET-1</scope>
</reference>
<reference key="19">
    <citation type="journal article" date="1992" name="Biochemistry">
        <title>Conformational isomerism of endothelin in acidic aqueous media: a quantitative NOESY analysis.</title>
        <authorList>
            <person name="Andersen N.H."/>
            <person name="Chen C."/>
            <person name="Marschner T.M."/>
            <person name="Krystek S.R. Jr."/>
            <person name="Bassolino D.A."/>
        </authorList>
    </citation>
    <scope>STRUCTURE BY NMR OF ET-1</scope>
</reference>
<reference key="20">
    <citation type="journal article" date="1992" name="J. Biomol. NMR">
        <title>Solution conformation of human big endothelin-1.</title>
        <authorList>
            <person name="Donlan M.L."/>
            <person name="Brown F.K."/>
            <person name="Jeffs P.W."/>
        </authorList>
    </citation>
    <scope>STRUCTURE BY NMR OF 53-90</scope>
</reference>
<reference key="21">
    <citation type="journal article" date="1995" name="Protein Sci.">
        <title>A comparison of X-ray and NMR structures for human endothelin-1.</title>
        <authorList>
            <person name="Wallace B.A."/>
            <person name="Janes R.W."/>
            <person name="Bassolino D.A."/>
            <person name="Krystek S.R. Jr."/>
        </authorList>
    </citation>
    <scope>COMPARISON OF NMR STRUCTURE WITH X-RAY STRUCTURE</scope>
</reference>
<reference key="22">
    <citation type="journal article" date="1999" name="J. Pept. Res.">
        <title>Solution structure of a novel ETB receptor selective agonist ET1-21 [Cys(Acm)1,15, Aib3,11, Leu7] by nuclear magnetic resonance spectroscopy and molecular modelling.</title>
        <authorList>
            <person name="Hewage C.M."/>
            <person name="Jiang L."/>
            <person name="Parkinson J.A."/>
            <person name="Ramage R."/>
            <person name="Sadler I.H."/>
        </authorList>
    </citation>
    <scope>STRUCTURE BY NMR OF ET1 AGONIST</scope>
</reference>
<reference key="23">
    <citation type="journal article" date="1999" name="Hypertension">
        <title>The Lys198Asn polymorphism in the endothelin-1 gene is associated with blood pressure in overweight people.</title>
        <authorList>
            <person name="Tiret L."/>
            <person name="Poirier O."/>
            <person name="Hallet V."/>
            <person name="McDonagh T.A."/>
            <person name="Morrison C."/>
            <person name="McMurray J.J."/>
            <person name="Dargie H.J."/>
            <person name="Arveiler D."/>
            <person name="Ruidavets J.B."/>
            <person name="Luc G."/>
            <person name="Evans A."/>
            <person name="Cambien F."/>
        </authorList>
    </citation>
    <scope>VARIANT ASN-198</scope>
</reference>
<reference key="24">
    <citation type="journal article" date="1999" name="Nat. Genet.">
        <title>Patterns of single-nucleotide polymorphisms in candidate genes for blood-pressure homeostasis.</title>
        <authorList>
            <person name="Halushka M.K."/>
            <person name="Fan J.-B."/>
            <person name="Bentley K."/>
            <person name="Hsie L."/>
            <person name="Shen N."/>
            <person name="Weder A."/>
            <person name="Cooper R."/>
            <person name="Lipshutz R."/>
            <person name="Chakravarti A."/>
        </authorList>
    </citation>
    <scope>VARIANT ASN-198</scope>
</reference>
<reference key="25">
    <citation type="journal article" date="2013" name="Am. J. Hum. Genet.">
        <title>Mutations in endothelin 1 cause recessive auriculocondylar syndrome and dominant isolated question-mark ears.</title>
        <authorList>
            <person name="Gordon C.T."/>
            <person name="Petit F."/>
            <person name="Kroisel P.M."/>
            <person name="Jakobsen L."/>
            <person name="Zechi-Ceide R.M."/>
            <person name="Oufadem M."/>
            <person name="Bole-Feysot C."/>
            <person name="Pruvost S."/>
            <person name="Masson C."/>
            <person name="Tores F."/>
            <person name="Hieu T."/>
            <person name="Nitschke P."/>
            <person name="Lindholm P."/>
            <person name="Pellerin P."/>
            <person name="Guion-Almeida M.L."/>
            <person name="Kokitsu-Nakata N.M."/>
            <person name="Vendramini-Pittoli S."/>
            <person name="Munnich A."/>
            <person name="Lyonnet S."/>
            <person name="Holder-Espinasse M."/>
            <person name="Amiel J."/>
        </authorList>
    </citation>
    <scope>VARIANT QME ASP-64</scope>
    <scope>VARIANTS ARCND3 HIS-77 AND GLU-91</scope>
</reference>
<feature type="signal peptide" evidence="11">
    <location>
        <begin position="1"/>
        <end position="17"/>
    </location>
</feature>
<feature type="propeptide" id="PRO_0000008058">
    <location>
        <begin position="18"/>
        <end position="50"/>
    </location>
</feature>
<feature type="peptide" id="PRO_0000008059" description="Big endothelin-1" evidence="6">
    <location>
        <begin position="53"/>
        <end position="90"/>
    </location>
</feature>
<feature type="peptide" id="PRO_0000008060" description="Endothelin-1" evidence="6">
    <location>
        <begin position="53"/>
        <end position="73"/>
    </location>
</feature>
<feature type="propeptide" id="PRO_0000008061">
    <location>
        <begin position="74"/>
        <end position="212"/>
    </location>
</feature>
<feature type="region of interest" description="Endothelin-like">
    <location>
        <begin position="109"/>
        <end position="123"/>
    </location>
</feature>
<feature type="region of interest" description="Disordered" evidence="3">
    <location>
        <begin position="168"/>
        <end position="212"/>
    </location>
</feature>
<feature type="compositionally biased region" description="Basic and acidic residues" evidence="3">
    <location>
        <begin position="168"/>
        <end position="181"/>
    </location>
</feature>
<feature type="compositionally biased region" description="Basic and acidic residues" evidence="3">
    <location>
        <begin position="189"/>
        <end position="205"/>
    </location>
</feature>
<feature type="site" description="Cleavage; by KEL" evidence="6">
    <location>
        <begin position="73"/>
        <end position="74"/>
    </location>
</feature>
<feature type="disulfide bond" evidence="14">
    <location>
        <begin position="53"/>
        <end position="67"/>
    </location>
</feature>
<feature type="disulfide bond" evidence="14">
    <location>
        <begin position="55"/>
        <end position="63"/>
    </location>
</feature>
<feature type="sequence variant" id="VAR_071152" description="In QME; dbSNP:rs587777233." evidence="13">
    <original>V</original>
    <variation>D</variation>
    <location>
        <position position="64"/>
    </location>
</feature>
<feature type="sequence variant" id="VAR_071153" description="In ARCND3; dbSNP:rs587777232." evidence="13">
    <original>P</original>
    <variation>H</variation>
    <location>
        <position position="77"/>
    </location>
</feature>
<feature type="sequence variant" id="VAR_071154" description="In ARCND3; dbSNP:rs587777231." evidence="13">
    <original>K</original>
    <variation>E</variation>
    <location>
        <position position="91"/>
    </location>
</feature>
<feature type="sequence variant" id="VAR_048933" description="In dbSNP:rs6413478.">
    <original>V</original>
    <variation>I</variation>
    <location>
        <position position="186"/>
    </location>
</feature>
<feature type="sequence variant" id="VAR_014188" description="May be correlated with HDL cholesterol levels is some populations and in a sex-specific manner; dbSNP:rs5370." evidence="4 5 7 8 10 16">
    <original>K</original>
    <variation>N</variation>
    <location>
        <position position="198"/>
    </location>
</feature>
<feature type="strand" evidence="19">
    <location>
        <begin position="53"/>
        <end position="56"/>
    </location>
</feature>
<feature type="strand" evidence="18">
    <location>
        <begin position="57"/>
        <end position="59"/>
    </location>
</feature>
<feature type="helix" evidence="19">
    <location>
        <begin position="61"/>
        <end position="67"/>
    </location>
</feature>
<feature type="turn" evidence="18">
    <location>
        <begin position="68"/>
        <end position="70"/>
    </location>
</feature>
<dbReference type="EMBL" id="Y00749">
    <property type="protein sequence ID" value="CAA68718.1"/>
    <property type="molecule type" value="mRNA"/>
</dbReference>
<dbReference type="EMBL" id="M25380">
    <property type="protein sequence ID" value="AAA52407.1"/>
    <property type="molecule type" value="Genomic_DNA"/>
</dbReference>
<dbReference type="EMBL" id="M25377">
    <property type="protein sequence ID" value="AAA52407.1"/>
    <property type="status" value="JOINED"/>
    <property type="molecule type" value="Genomic_DNA"/>
</dbReference>
<dbReference type="EMBL" id="M25378">
    <property type="protein sequence ID" value="AAA52407.1"/>
    <property type="status" value="JOINED"/>
    <property type="molecule type" value="Genomic_DNA"/>
</dbReference>
<dbReference type="EMBL" id="M25379">
    <property type="protein sequence ID" value="AAA52407.1"/>
    <property type="status" value="JOINED"/>
    <property type="molecule type" value="Genomic_DNA"/>
</dbReference>
<dbReference type="EMBL" id="J05008">
    <property type="protein sequence ID" value="AAA52339.1"/>
    <property type="molecule type" value="Genomic_DNA"/>
</dbReference>
<dbReference type="EMBL" id="S56805">
    <property type="protein sequence ID" value="AAB25760.1"/>
    <property type="molecule type" value="mRNA"/>
</dbReference>
<dbReference type="EMBL" id="AY434104">
    <property type="protein sequence ID" value="AAQ96600.1"/>
    <property type="molecule type" value="Genomic_DNA"/>
</dbReference>
<dbReference type="EMBL" id="Z98050">
    <property type="status" value="NOT_ANNOTATED_CDS"/>
    <property type="molecule type" value="Genomic_DNA"/>
</dbReference>
<dbReference type="EMBL" id="BC009720">
    <property type="protein sequence ID" value="AAH09720.1"/>
    <property type="molecule type" value="mRNA"/>
</dbReference>
<dbReference type="EMBL" id="M25549">
    <property type="protein sequence ID" value="AAA52338.1"/>
    <property type="molecule type" value="Genomic_DNA"/>
</dbReference>
<dbReference type="CCDS" id="CCDS4522.1"/>
<dbReference type="PIR" id="A36517">
    <property type="entry name" value="ANHU1"/>
</dbReference>
<dbReference type="RefSeq" id="NP_001161791.1">
    <property type="nucleotide sequence ID" value="NM_001168319.1"/>
</dbReference>
<dbReference type="RefSeq" id="NP_001403492.1">
    <property type="nucleotide sequence ID" value="NM_001416563.1"/>
</dbReference>
<dbReference type="RefSeq" id="NP_001403493.1">
    <property type="nucleotide sequence ID" value="NM_001416564.1"/>
</dbReference>
<dbReference type="RefSeq" id="NP_001403494.1">
    <property type="nucleotide sequence ID" value="NM_001416565.1"/>
</dbReference>
<dbReference type="RefSeq" id="NP_001946.3">
    <property type="nucleotide sequence ID" value="NM_001955.4"/>
</dbReference>
<dbReference type="RefSeq" id="XP_011512632.1">
    <property type="nucleotide sequence ID" value="XM_011514330.2"/>
</dbReference>
<dbReference type="RefSeq" id="XP_011512633.1">
    <property type="nucleotide sequence ID" value="XM_011514331.2"/>
</dbReference>
<dbReference type="RefSeq" id="XP_016865820.1">
    <property type="nucleotide sequence ID" value="XM_017010331.1"/>
</dbReference>
<dbReference type="PDB" id="1EDN">
    <property type="method" value="X-ray"/>
    <property type="resolution" value="2.18 A"/>
    <property type="chains" value="A=53-73"/>
</dbReference>
<dbReference type="PDB" id="1EDP">
    <property type="method" value="NMR"/>
    <property type="chains" value="A=53-69"/>
</dbReference>
<dbReference type="PDB" id="1T7H">
    <property type="method" value="X-ray"/>
    <property type="resolution" value="1.13 A"/>
    <property type="chains" value="A/B=51-68"/>
</dbReference>
<dbReference type="PDB" id="1V6R">
    <property type="method" value="NMR"/>
    <property type="chains" value="A=53-73"/>
</dbReference>
<dbReference type="PDB" id="5GLH">
    <property type="method" value="X-ray"/>
    <property type="resolution" value="2.80 A"/>
    <property type="chains" value="B=53-73"/>
</dbReference>
<dbReference type="PDB" id="6DK5">
    <property type="method" value="X-ray"/>
    <property type="resolution" value="1.85 A"/>
    <property type="chains" value="A/B=53-73"/>
</dbReference>
<dbReference type="PDB" id="8HCQ">
    <property type="method" value="EM"/>
    <property type="resolution" value="3.01 A"/>
    <property type="chains" value="L=53-73"/>
</dbReference>
<dbReference type="PDB" id="8HCX">
    <property type="method" value="EM"/>
    <property type="resolution" value="3.50 A"/>
    <property type="chains" value="D=53-73"/>
</dbReference>
<dbReference type="PDB" id="8IY5">
    <property type="method" value="EM"/>
    <property type="resolution" value="2.80 A"/>
    <property type="chains" value="L=53-73"/>
</dbReference>
<dbReference type="PDB" id="8IY6">
    <property type="method" value="EM"/>
    <property type="resolution" value="3.13 A"/>
    <property type="chains" value="L=53-73"/>
</dbReference>
<dbReference type="PDB" id="8XGR">
    <property type="method" value="EM"/>
    <property type="resolution" value="3.20 A"/>
    <property type="chains" value="L=53-73"/>
</dbReference>
<dbReference type="PDB" id="8XVE">
    <property type="method" value="EM"/>
    <property type="resolution" value="3.00 A"/>
    <property type="chains" value="P=58-73"/>
</dbReference>
<dbReference type="PDB" id="8XVH">
    <property type="method" value="EM"/>
    <property type="resolution" value="3.26 A"/>
    <property type="chains" value="T=53-73"/>
</dbReference>
<dbReference type="PDB" id="8XVI">
    <property type="method" value="EM"/>
    <property type="resolution" value="3.32 A"/>
    <property type="chains" value="T=53-73"/>
</dbReference>
<dbReference type="PDB" id="8XWP">
    <property type="method" value="EM"/>
    <property type="resolution" value="3.21 A"/>
    <property type="chains" value="L=53-73"/>
</dbReference>
<dbReference type="PDB" id="8XWQ">
    <property type="method" value="EM"/>
    <property type="resolution" value="4.60 A"/>
    <property type="chains" value="L=53-73"/>
</dbReference>
<dbReference type="PDB" id="8ZRT">
    <property type="method" value="EM"/>
    <property type="resolution" value="3.62 A"/>
    <property type="chains" value="L=53-73"/>
</dbReference>
<dbReference type="PDBsum" id="1EDN"/>
<dbReference type="PDBsum" id="1EDP"/>
<dbReference type="PDBsum" id="1T7H"/>
<dbReference type="PDBsum" id="1V6R"/>
<dbReference type="PDBsum" id="5GLH"/>
<dbReference type="PDBsum" id="6DK5"/>
<dbReference type="PDBsum" id="8HCQ"/>
<dbReference type="PDBsum" id="8HCX"/>
<dbReference type="PDBsum" id="8IY5"/>
<dbReference type="PDBsum" id="8IY6"/>
<dbReference type="PDBsum" id="8XGR"/>
<dbReference type="PDBsum" id="8XVE"/>
<dbReference type="PDBsum" id="8XVH"/>
<dbReference type="PDBsum" id="8XVI"/>
<dbReference type="PDBsum" id="8XWP"/>
<dbReference type="PDBsum" id="8XWQ"/>
<dbReference type="PDBsum" id="8ZRT"/>
<dbReference type="BMRB" id="P05305"/>
<dbReference type="EMDB" id="EMD-34663"/>
<dbReference type="EMDB" id="EMD-34667"/>
<dbReference type="EMDB" id="EMD-35814"/>
<dbReference type="EMDB" id="EMD-35815"/>
<dbReference type="EMDB" id="EMD-38330"/>
<dbReference type="EMDB" id="EMD-38704"/>
<dbReference type="EMDB" id="EMD-38705"/>
<dbReference type="EMDB" id="EMD-38740"/>
<dbReference type="EMDB" id="EMD-38741"/>
<dbReference type="EMDB" id="EMD-60404"/>
<dbReference type="SMR" id="P05305"/>
<dbReference type="BioGRID" id="108228">
    <property type="interactions" value="7"/>
</dbReference>
<dbReference type="CORUM" id="P05305"/>
<dbReference type="FunCoup" id="P05305">
    <property type="interactions" value="1067"/>
</dbReference>
<dbReference type="IntAct" id="P05305">
    <property type="interactions" value="7"/>
</dbReference>
<dbReference type="STRING" id="9606.ENSP00000368683"/>
<dbReference type="BindingDB" id="P05305"/>
<dbReference type="DrugBank" id="DB05407">
    <property type="generic name" value="TBC-3711"/>
</dbReference>
<dbReference type="GlyGen" id="P05305">
    <property type="glycosylation" value="4 sites, 1 O-linked glycan (2 sites)"/>
</dbReference>
<dbReference type="iPTMnet" id="P05305"/>
<dbReference type="PhosphoSitePlus" id="P05305"/>
<dbReference type="BioMuta" id="EDN1"/>
<dbReference type="DMDM" id="119610"/>
<dbReference type="MassIVE" id="P05305"/>
<dbReference type="PaxDb" id="9606-ENSP00000368683"/>
<dbReference type="PeptideAtlas" id="P05305"/>
<dbReference type="ProteomicsDB" id="51829"/>
<dbReference type="TopDownProteomics" id="P05305"/>
<dbReference type="Antibodypedia" id="10136">
    <property type="antibodies" value="760 antibodies from 38 providers"/>
</dbReference>
<dbReference type="DNASU" id="1906"/>
<dbReference type="Ensembl" id="ENST00000379375.6">
    <property type="protein sequence ID" value="ENSP00000368683.5"/>
    <property type="gene ID" value="ENSG00000078401.7"/>
</dbReference>
<dbReference type="GeneID" id="1906"/>
<dbReference type="KEGG" id="hsa:1906"/>
<dbReference type="MANE-Select" id="ENST00000379375.6">
    <property type="protein sequence ID" value="ENSP00000368683.5"/>
    <property type="RefSeq nucleotide sequence ID" value="NM_001955.5"/>
    <property type="RefSeq protein sequence ID" value="NP_001946.3"/>
</dbReference>
<dbReference type="AGR" id="HGNC:3176"/>
<dbReference type="CTD" id="1906"/>
<dbReference type="DisGeNET" id="1906"/>
<dbReference type="GeneCards" id="EDN1"/>
<dbReference type="HGNC" id="HGNC:3176">
    <property type="gene designation" value="EDN1"/>
</dbReference>
<dbReference type="HPA" id="ENSG00000078401">
    <property type="expression patterns" value="Tissue enhanced (adipose)"/>
</dbReference>
<dbReference type="MalaCards" id="EDN1"/>
<dbReference type="MIM" id="131240">
    <property type="type" value="gene"/>
</dbReference>
<dbReference type="MIM" id="612798">
    <property type="type" value="phenotype"/>
</dbReference>
<dbReference type="MIM" id="615706">
    <property type="type" value="phenotype"/>
</dbReference>
<dbReference type="neXtProt" id="NX_P05305"/>
<dbReference type="OpenTargets" id="ENSG00000078401"/>
<dbReference type="Orphanet" id="137888">
    <property type="disease" value="Auriculocondylar syndrome"/>
</dbReference>
<dbReference type="PharmGKB" id="PA27614"/>
<dbReference type="VEuPathDB" id="HostDB:ENSG00000078401"/>
<dbReference type="eggNOG" id="ENOG502S1NV">
    <property type="taxonomic scope" value="Eukaryota"/>
</dbReference>
<dbReference type="GeneTree" id="ENSGT00950000183053"/>
<dbReference type="HOGENOM" id="CLU_090013_1_0_1"/>
<dbReference type="InParanoid" id="P05305"/>
<dbReference type="OMA" id="TDHRNRC"/>
<dbReference type="OrthoDB" id="8873756at2759"/>
<dbReference type="PAN-GO" id="P05305">
    <property type="GO annotations" value="8 GO annotations based on evolutionary models"/>
</dbReference>
<dbReference type="PhylomeDB" id="P05305"/>
<dbReference type="TreeFam" id="TF333184"/>
<dbReference type="PathwayCommons" id="P05305"/>
<dbReference type="Reactome" id="R-HSA-375276">
    <property type="pathway name" value="Peptide ligand-binding receptors"/>
</dbReference>
<dbReference type="Reactome" id="R-HSA-416476">
    <property type="pathway name" value="G alpha (q) signalling events"/>
</dbReference>
<dbReference type="Reactome" id="R-HSA-9856649">
    <property type="pathway name" value="Transcriptional and post-translational regulation of MITF-M expression and activity"/>
</dbReference>
<dbReference type="SignaLink" id="P05305"/>
<dbReference type="SIGNOR" id="P05305"/>
<dbReference type="BioGRID-ORCS" id="1906">
    <property type="hits" value="9 hits in 1150 CRISPR screens"/>
</dbReference>
<dbReference type="EvolutionaryTrace" id="P05305"/>
<dbReference type="GeneWiki" id="Endothelin_1"/>
<dbReference type="GenomeRNAi" id="1906"/>
<dbReference type="Pharos" id="P05305">
    <property type="development level" value="Tbio"/>
</dbReference>
<dbReference type="PRO" id="PR:P05305"/>
<dbReference type="Proteomes" id="UP000005640">
    <property type="component" value="Chromosome 6"/>
</dbReference>
<dbReference type="RNAct" id="P05305">
    <property type="molecule type" value="protein"/>
</dbReference>
<dbReference type="Bgee" id="ENSG00000078401">
    <property type="expression patterns" value="Expressed in lower lobe of lung and 174 other cell types or tissues"/>
</dbReference>
<dbReference type="ExpressionAtlas" id="P05305">
    <property type="expression patterns" value="baseline and differential"/>
</dbReference>
<dbReference type="GO" id="GO:0045178">
    <property type="term" value="C:basal part of cell"/>
    <property type="evidence" value="ECO:0007669"/>
    <property type="project" value="Ensembl"/>
</dbReference>
<dbReference type="GO" id="GO:0005737">
    <property type="term" value="C:cytoplasm"/>
    <property type="evidence" value="ECO:0000314"/>
    <property type="project" value="BHF-UCL"/>
</dbReference>
<dbReference type="GO" id="GO:0005576">
    <property type="term" value="C:extracellular region"/>
    <property type="evidence" value="ECO:0000304"/>
    <property type="project" value="Reactome"/>
</dbReference>
<dbReference type="GO" id="GO:0005615">
    <property type="term" value="C:extracellular space"/>
    <property type="evidence" value="ECO:0000314"/>
    <property type="project" value="BHF-UCL"/>
</dbReference>
<dbReference type="GO" id="GO:0048237">
    <property type="term" value="C:rough endoplasmic reticulum lumen"/>
    <property type="evidence" value="ECO:0007669"/>
    <property type="project" value="Ensembl"/>
</dbReference>
<dbReference type="GO" id="GO:0030133">
    <property type="term" value="C:transport vesicle"/>
    <property type="evidence" value="ECO:0000304"/>
    <property type="project" value="Reactome"/>
</dbReference>
<dbReference type="GO" id="GO:0033093">
    <property type="term" value="C:Weibel-Palade body"/>
    <property type="evidence" value="ECO:0007669"/>
    <property type="project" value="Ensembl"/>
</dbReference>
<dbReference type="GO" id="GO:0005125">
    <property type="term" value="F:cytokine activity"/>
    <property type="evidence" value="ECO:0000314"/>
    <property type="project" value="BHF-UCL"/>
</dbReference>
<dbReference type="GO" id="GO:0031707">
    <property type="term" value="F:endothelin A receptor binding"/>
    <property type="evidence" value="ECO:0000314"/>
    <property type="project" value="BHF-UCL"/>
</dbReference>
<dbReference type="GO" id="GO:0031708">
    <property type="term" value="F:endothelin B receptor binding"/>
    <property type="evidence" value="ECO:0000314"/>
    <property type="project" value="BHF-UCL"/>
</dbReference>
<dbReference type="GO" id="GO:0005179">
    <property type="term" value="F:hormone activity"/>
    <property type="evidence" value="ECO:0000314"/>
    <property type="project" value="BHF-UCL"/>
</dbReference>
<dbReference type="GO" id="GO:0007193">
    <property type="term" value="P:adenylate cyclase-inhibiting G protein-coupled receptor signaling pathway"/>
    <property type="evidence" value="ECO:0007669"/>
    <property type="project" value="Ensembl"/>
</dbReference>
<dbReference type="GO" id="GO:0014824">
    <property type="term" value="P:artery smooth muscle contraction"/>
    <property type="evidence" value="ECO:0000314"/>
    <property type="project" value="BHF-UCL"/>
</dbReference>
<dbReference type="GO" id="GO:0048675">
    <property type="term" value="P:axon extension"/>
    <property type="evidence" value="ECO:0007669"/>
    <property type="project" value="Ensembl"/>
</dbReference>
<dbReference type="GO" id="GO:0060385">
    <property type="term" value="P:axonogenesis involved in innervation"/>
    <property type="evidence" value="ECO:0007669"/>
    <property type="project" value="Ensembl"/>
</dbReference>
<dbReference type="GO" id="GO:0007589">
    <property type="term" value="P:body fluid secretion"/>
    <property type="evidence" value="ECO:0007669"/>
    <property type="project" value="Ensembl"/>
</dbReference>
<dbReference type="GO" id="GO:0001569">
    <property type="term" value="P:branching involved in blood vessel morphogenesis"/>
    <property type="evidence" value="ECO:0007669"/>
    <property type="project" value="Ensembl"/>
</dbReference>
<dbReference type="GO" id="GO:0070588">
    <property type="term" value="P:calcium ion transmembrane transport"/>
    <property type="evidence" value="ECO:0007669"/>
    <property type="project" value="Ensembl"/>
</dbReference>
<dbReference type="GO" id="GO:0019722">
    <property type="term" value="P:calcium-mediated signaling"/>
    <property type="evidence" value="ECO:0000314"/>
    <property type="project" value="BHF-UCL"/>
</dbReference>
<dbReference type="GO" id="GO:0141156">
    <property type="term" value="P:cAMP/PKA signal transduction"/>
    <property type="evidence" value="ECO:0000314"/>
    <property type="project" value="MGI"/>
</dbReference>
<dbReference type="GO" id="GO:0060070">
    <property type="term" value="P:canonical Wnt signaling pathway"/>
    <property type="evidence" value="ECO:0007669"/>
    <property type="project" value="Ensembl"/>
</dbReference>
<dbReference type="GO" id="GO:0003253">
    <property type="term" value="P:cardiac neural crest cell migration involved in outflow tract morphogenesis"/>
    <property type="evidence" value="ECO:0007669"/>
    <property type="project" value="Ensembl"/>
</dbReference>
<dbReference type="GO" id="GO:0051216">
    <property type="term" value="P:cartilage development"/>
    <property type="evidence" value="ECO:0007669"/>
    <property type="project" value="Ensembl"/>
</dbReference>
<dbReference type="GO" id="GO:0007166">
    <property type="term" value="P:cell surface receptor signaling pathway"/>
    <property type="evidence" value="ECO:0000314"/>
    <property type="project" value="BHF-UCL"/>
</dbReference>
<dbReference type="GO" id="GO:0007267">
    <property type="term" value="P:cell-cell signaling"/>
    <property type="evidence" value="ECO:0000314"/>
    <property type="project" value="BHF-UCL"/>
</dbReference>
<dbReference type="GO" id="GO:0071277">
    <property type="term" value="P:cellular response to calcium ion"/>
    <property type="evidence" value="ECO:0007669"/>
    <property type="project" value="Ensembl"/>
</dbReference>
<dbReference type="GO" id="GO:0071398">
    <property type="term" value="P:cellular response to fatty acid"/>
    <property type="evidence" value="ECO:0007669"/>
    <property type="project" value="Ensembl"/>
</dbReference>
<dbReference type="GO" id="GO:0071372">
    <property type="term" value="P:cellular response to follicle-stimulating hormone stimulus"/>
    <property type="evidence" value="ECO:0007669"/>
    <property type="project" value="Ensembl"/>
</dbReference>
<dbReference type="GO" id="GO:0071385">
    <property type="term" value="P:cellular response to glucocorticoid stimulus"/>
    <property type="evidence" value="ECO:0007669"/>
    <property type="project" value="Ensembl"/>
</dbReference>
<dbReference type="GO" id="GO:0044751">
    <property type="term" value="P:cellular response to human chorionic gonadotropin stimulus"/>
    <property type="evidence" value="ECO:0007669"/>
    <property type="project" value="Ensembl"/>
</dbReference>
<dbReference type="GO" id="GO:0070301">
    <property type="term" value="P:cellular response to hydrogen peroxide"/>
    <property type="evidence" value="ECO:0000314"/>
    <property type="project" value="MGI"/>
</dbReference>
<dbReference type="GO" id="GO:0071456">
    <property type="term" value="P:cellular response to hypoxia"/>
    <property type="evidence" value="ECO:0007669"/>
    <property type="project" value="Ensembl"/>
</dbReference>
<dbReference type="GO" id="GO:0071347">
    <property type="term" value="P:cellular response to interleukin-1"/>
    <property type="evidence" value="ECO:0007669"/>
    <property type="project" value="Ensembl"/>
</dbReference>
<dbReference type="GO" id="GO:0071373">
    <property type="term" value="P:cellular response to luteinizing hormone stimulus"/>
    <property type="evidence" value="ECO:0007669"/>
    <property type="project" value="Ensembl"/>
</dbReference>
<dbReference type="GO" id="GO:0071389">
    <property type="term" value="P:cellular response to mineralocorticoid stimulus"/>
    <property type="evidence" value="ECO:0007669"/>
    <property type="project" value="Ensembl"/>
</dbReference>
<dbReference type="GO" id="GO:0097237">
    <property type="term" value="P:cellular response to toxic substance"/>
    <property type="evidence" value="ECO:0000314"/>
    <property type="project" value="MGI"/>
</dbReference>
<dbReference type="GO" id="GO:0071560">
    <property type="term" value="P:cellular response to transforming growth factor beta stimulus"/>
    <property type="evidence" value="ECO:0007669"/>
    <property type="project" value="Ensembl"/>
</dbReference>
<dbReference type="GO" id="GO:0071356">
    <property type="term" value="P:cellular response to tumor necrosis factor"/>
    <property type="evidence" value="ECO:0007669"/>
    <property type="project" value="Ensembl"/>
</dbReference>
<dbReference type="GO" id="GO:0071346">
    <property type="term" value="P:cellular response to type II interferon"/>
    <property type="evidence" value="ECO:0007669"/>
    <property type="project" value="Ensembl"/>
</dbReference>
<dbReference type="GO" id="GO:0071466">
    <property type="term" value="P:cellular response to xenobiotic stimulus"/>
    <property type="evidence" value="ECO:0007669"/>
    <property type="project" value="Ensembl"/>
</dbReference>
<dbReference type="GO" id="GO:0009953">
    <property type="term" value="P:dorsal/ventral pattern formation"/>
    <property type="evidence" value="ECO:0007669"/>
    <property type="project" value="Ensembl"/>
</dbReference>
<dbReference type="GO" id="GO:0035050">
    <property type="term" value="P:embryonic heart tube development"/>
    <property type="evidence" value="ECO:0007669"/>
    <property type="project" value="Ensembl"/>
</dbReference>
<dbReference type="GO" id="GO:0086100">
    <property type="term" value="P:endothelin receptor signaling pathway"/>
    <property type="evidence" value="ECO:0000314"/>
    <property type="project" value="BHF-UCL"/>
</dbReference>
<dbReference type="GO" id="GO:0086101">
    <property type="term" value="P:endothelin receptor signaling pathway involved in heart process"/>
    <property type="evidence" value="ECO:0007669"/>
    <property type="project" value="Ensembl"/>
</dbReference>
<dbReference type="GO" id="GO:0042045">
    <property type="term" value="P:epithelial fluid transport"/>
    <property type="evidence" value="ECO:0007669"/>
    <property type="project" value="Ensembl"/>
</dbReference>
<dbReference type="GO" id="GO:0070371">
    <property type="term" value="P:ERK1 and ERK2 cascade"/>
    <property type="evidence" value="ECO:0007669"/>
    <property type="project" value="Ensembl"/>
</dbReference>
<dbReference type="GO" id="GO:0007186">
    <property type="term" value="P:G protein-coupled receptor signaling pathway"/>
    <property type="evidence" value="ECO:0000314"/>
    <property type="project" value="BHF-UCL"/>
</dbReference>
<dbReference type="GO" id="GO:0072011">
    <property type="term" value="P:glomerular endothelium development"/>
    <property type="evidence" value="ECO:0007669"/>
    <property type="project" value="Ensembl"/>
</dbReference>
<dbReference type="GO" id="GO:0003094">
    <property type="term" value="P:glomerular filtration"/>
    <property type="evidence" value="ECO:0007669"/>
    <property type="project" value="Ensembl"/>
</dbReference>
<dbReference type="GO" id="GO:0001821">
    <property type="term" value="P:histamine secretion"/>
    <property type="evidence" value="ECO:0007669"/>
    <property type="project" value="Ensembl"/>
</dbReference>
<dbReference type="GO" id="GO:0001701">
    <property type="term" value="P:in utero embryonic development"/>
    <property type="evidence" value="ECO:0007669"/>
    <property type="project" value="Ensembl"/>
</dbReference>
<dbReference type="GO" id="GO:0006874">
    <property type="term" value="P:intracellular calcium ion homeostasis"/>
    <property type="evidence" value="ECO:0000314"/>
    <property type="project" value="MGI"/>
</dbReference>
<dbReference type="GO" id="GO:0045321">
    <property type="term" value="P:leukocyte activation"/>
    <property type="evidence" value="ECO:0000304"/>
    <property type="project" value="BHF-UCL"/>
</dbReference>
<dbReference type="GO" id="GO:0060137">
    <property type="term" value="P:maternal process involved in parturition"/>
    <property type="evidence" value="ECO:0007669"/>
    <property type="project" value="Ensembl"/>
</dbReference>
<dbReference type="GO" id="GO:1903537">
    <property type="term" value="P:meiotic cell cycle process involved in oocyte maturation"/>
    <property type="evidence" value="ECO:0007669"/>
    <property type="project" value="Ensembl"/>
</dbReference>
<dbReference type="GO" id="GO:0051899">
    <property type="term" value="P:membrane depolarization"/>
    <property type="evidence" value="ECO:0007669"/>
    <property type="project" value="Ensembl"/>
</dbReference>
<dbReference type="GO" id="GO:0042474">
    <property type="term" value="P:middle ear morphogenesis"/>
    <property type="evidence" value="ECO:0007669"/>
    <property type="project" value="Ensembl"/>
</dbReference>
<dbReference type="GO" id="GO:0007005">
    <property type="term" value="P:mitochondrion organization"/>
    <property type="evidence" value="ECO:0007669"/>
    <property type="project" value="Ensembl"/>
</dbReference>
<dbReference type="GO" id="GO:0030195">
    <property type="term" value="P:negative regulation of blood coagulation"/>
    <property type="evidence" value="ECO:0000304"/>
    <property type="project" value="BHF-UCL"/>
</dbReference>
<dbReference type="GO" id="GO:0010629">
    <property type="term" value="P:negative regulation of gene expression"/>
    <property type="evidence" value="ECO:0000314"/>
    <property type="project" value="BHF-UCL"/>
</dbReference>
<dbReference type="GO" id="GO:0046888">
    <property type="term" value="P:negative regulation of hormone secretion"/>
    <property type="evidence" value="ECO:0007669"/>
    <property type="project" value="Ensembl"/>
</dbReference>
<dbReference type="GO" id="GO:0160195">
    <property type="term" value="P:negative regulation of phospholipase C/protein kinase C signal transduction"/>
    <property type="evidence" value="ECO:0000314"/>
    <property type="project" value="BHF-UCL"/>
</dbReference>
<dbReference type="GO" id="GO:0051248">
    <property type="term" value="P:negative regulation of protein metabolic process"/>
    <property type="evidence" value="ECO:0000314"/>
    <property type="project" value="BHF-UCL"/>
</dbReference>
<dbReference type="GO" id="GO:0034392">
    <property type="term" value="P:negative regulation of smooth muscle cell apoptotic process"/>
    <property type="evidence" value="ECO:0007669"/>
    <property type="project" value="Ensembl"/>
</dbReference>
<dbReference type="GO" id="GO:0000122">
    <property type="term" value="P:negative regulation of transcription by RNA polymerase II"/>
    <property type="evidence" value="ECO:0000314"/>
    <property type="project" value="BHF-UCL"/>
</dbReference>
<dbReference type="GO" id="GO:0014034">
    <property type="term" value="P:neural crest cell fate commitment"/>
    <property type="evidence" value="ECO:0007669"/>
    <property type="project" value="Ensembl"/>
</dbReference>
<dbReference type="GO" id="GO:0030185">
    <property type="term" value="P:nitric oxide transport"/>
    <property type="evidence" value="ECO:0000314"/>
    <property type="project" value="BHF-UCL"/>
</dbReference>
<dbReference type="GO" id="GO:0003357">
    <property type="term" value="P:noradrenergic neuron differentiation"/>
    <property type="evidence" value="ECO:0007669"/>
    <property type="project" value="Ensembl"/>
</dbReference>
<dbReference type="GO" id="GO:0030072">
    <property type="term" value="P:peptide hormone secretion"/>
    <property type="evidence" value="ECO:0000314"/>
    <property type="project" value="BHF-UCL"/>
</dbReference>
<dbReference type="GO" id="GO:0061626">
    <property type="term" value="P:pharyngeal arch artery morphogenesis"/>
    <property type="evidence" value="ECO:0007669"/>
    <property type="project" value="Ensembl"/>
</dbReference>
<dbReference type="GO" id="GO:0043491">
    <property type="term" value="P:phosphatidylinositol 3-kinase/protein kinase B signal transduction"/>
    <property type="evidence" value="ECO:0000314"/>
    <property type="project" value="BHF-UCL"/>
</dbReference>
<dbReference type="GO" id="GO:0007200">
    <property type="term" value="P:phospholipase C-activating G protein-coupled receptor signaling pathway"/>
    <property type="evidence" value="ECO:0007669"/>
    <property type="project" value="Ensembl"/>
</dbReference>
<dbReference type="GO" id="GO:0031583">
    <property type="term" value="P:phospholipase D-activating G protein-coupled receptor signaling pathway"/>
    <property type="evidence" value="ECO:0007669"/>
    <property type="project" value="Ensembl"/>
</dbReference>
<dbReference type="GO" id="GO:0072112">
    <property type="term" value="P:podocyte differentiation"/>
    <property type="evidence" value="ECO:0007669"/>
    <property type="project" value="Ensembl"/>
</dbReference>
<dbReference type="GO" id="GO:1905653">
    <property type="term" value="P:positive regulation of artery morphogenesis"/>
    <property type="evidence" value="ECO:0007669"/>
    <property type="project" value="Ensembl"/>
</dbReference>
<dbReference type="GO" id="GO:0050850">
    <property type="term" value="P:positive regulation of calcium-mediated signaling"/>
    <property type="evidence" value="ECO:0000314"/>
    <property type="project" value="BHF-UCL"/>
</dbReference>
<dbReference type="GO" id="GO:0043123">
    <property type="term" value="P:positive regulation of canonical NF-kappaB signal transduction"/>
    <property type="evidence" value="ECO:0007669"/>
    <property type="project" value="Ensembl"/>
</dbReference>
<dbReference type="GO" id="GO:0010613">
    <property type="term" value="P:positive regulation of cardiac muscle hypertrophy"/>
    <property type="evidence" value="ECO:0000314"/>
    <property type="project" value="BHF-UCL"/>
</dbReference>
<dbReference type="GO" id="GO:2001259">
    <property type="term" value="P:positive regulation of cation channel activity"/>
    <property type="evidence" value="ECO:0000314"/>
    <property type="project" value="MGI"/>
</dbReference>
<dbReference type="GO" id="GO:0061051">
    <property type="term" value="P:positive regulation of cell growth involved in cardiac muscle cell development"/>
    <property type="evidence" value="ECO:0000314"/>
    <property type="project" value="BHF-UCL"/>
</dbReference>
<dbReference type="GO" id="GO:0030335">
    <property type="term" value="P:positive regulation of cell migration"/>
    <property type="evidence" value="ECO:0000314"/>
    <property type="project" value="BHF-UCL"/>
</dbReference>
<dbReference type="GO" id="GO:0008284">
    <property type="term" value="P:positive regulation of cell population proliferation"/>
    <property type="evidence" value="ECO:0000314"/>
    <property type="project" value="BHF-UCL"/>
</dbReference>
<dbReference type="GO" id="GO:0045793">
    <property type="term" value="P:positive regulation of cell size"/>
    <property type="evidence" value="ECO:0000314"/>
    <property type="project" value="BHF-UCL"/>
</dbReference>
<dbReference type="GO" id="GO:0070101">
    <property type="term" value="P:positive regulation of chemokine-mediated signaling pathway"/>
    <property type="evidence" value="ECO:0000314"/>
    <property type="project" value="BHF-UCL"/>
</dbReference>
<dbReference type="GO" id="GO:0007204">
    <property type="term" value="P:positive regulation of cytosolic calcium ion concentration"/>
    <property type="evidence" value="ECO:0007669"/>
    <property type="project" value="Ensembl"/>
</dbReference>
<dbReference type="GO" id="GO:0010595">
    <property type="term" value="P:positive regulation of endothelial cell migration"/>
    <property type="evidence" value="ECO:0000304"/>
    <property type="project" value="BHF-UCL"/>
</dbReference>
<dbReference type="GO" id="GO:0010460">
    <property type="term" value="P:positive regulation of heart rate"/>
    <property type="evidence" value="ECO:0000314"/>
    <property type="project" value="BHF-UCL"/>
</dbReference>
<dbReference type="GO" id="GO:0046887">
    <property type="term" value="P:positive regulation of hormone secretion"/>
    <property type="evidence" value="ECO:0000314"/>
    <property type="project" value="BHF-UCL"/>
</dbReference>
<dbReference type="GO" id="GO:0046330">
    <property type="term" value="P:positive regulation of JNK cascade"/>
    <property type="evidence" value="ECO:0000314"/>
    <property type="project" value="BHF-UCL"/>
</dbReference>
<dbReference type="GO" id="GO:0043410">
    <property type="term" value="P:positive regulation of MAPK cascade"/>
    <property type="evidence" value="ECO:0000314"/>
    <property type="project" value="BHF-UCL"/>
</dbReference>
<dbReference type="GO" id="GO:0045840">
    <property type="term" value="P:positive regulation of mitotic nuclear division"/>
    <property type="evidence" value="ECO:0000314"/>
    <property type="project" value="BHF-UCL"/>
</dbReference>
<dbReference type="GO" id="GO:0090023">
    <property type="term" value="P:positive regulation of neutrophil chemotaxis"/>
    <property type="evidence" value="ECO:0007669"/>
    <property type="project" value="Ensembl"/>
</dbReference>
<dbReference type="GO" id="GO:0045429">
    <property type="term" value="P:positive regulation of nitric oxide biosynthetic process"/>
    <property type="evidence" value="ECO:0000304"/>
    <property type="project" value="BHF-UCL"/>
</dbReference>
<dbReference type="GO" id="GO:1901224">
    <property type="term" value="P:positive regulation of non-canonical NF-kappaB signal transduction"/>
    <property type="evidence" value="ECO:0007669"/>
    <property type="project" value="Ensembl"/>
</dbReference>
<dbReference type="GO" id="GO:0042482">
    <property type="term" value="P:positive regulation of odontogenesis"/>
    <property type="evidence" value="ECO:0007669"/>
    <property type="project" value="Ensembl"/>
</dbReference>
<dbReference type="GO" id="GO:0032308">
    <property type="term" value="P:positive regulation of prostaglandin secretion"/>
    <property type="evidence" value="ECO:0007669"/>
    <property type="project" value="Ensembl"/>
</dbReference>
<dbReference type="GO" id="GO:0060585">
    <property type="term" value="P:positive regulation of prostaglandin-endoperoxide synthase activity"/>
    <property type="evidence" value="ECO:0000315"/>
    <property type="project" value="BHF-UCL"/>
</dbReference>
<dbReference type="GO" id="GO:1900182">
    <property type="term" value="P:positive regulation of protein localization to nucleus"/>
    <property type="evidence" value="ECO:0000250"/>
    <property type="project" value="UniProtKB"/>
</dbReference>
<dbReference type="GO" id="GO:0035815">
    <property type="term" value="P:positive regulation of renal sodium excretion"/>
    <property type="evidence" value="ECO:0007669"/>
    <property type="project" value="Ensembl"/>
</dbReference>
<dbReference type="GO" id="GO:0060298">
    <property type="term" value="P:positive regulation of sarcomere organization"/>
    <property type="evidence" value="ECO:0000315"/>
    <property type="project" value="BHF-UCL"/>
</dbReference>
<dbReference type="GO" id="GO:0048661">
    <property type="term" value="P:positive regulation of smooth muscle cell proliferation"/>
    <property type="evidence" value="ECO:0000314"/>
    <property type="project" value="BHF-UCL"/>
</dbReference>
<dbReference type="GO" id="GO:0045987">
    <property type="term" value="P:positive regulation of smooth muscle contraction"/>
    <property type="evidence" value="ECO:0000318"/>
    <property type="project" value="GO_Central"/>
</dbReference>
<dbReference type="GO" id="GO:0045944">
    <property type="term" value="P:positive regulation of transcription by RNA polymerase II"/>
    <property type="evidence" value="ECO:0000314"/>
    <property type="project" value="BHF-UCL"/>
</dbReference>
<dbReference type="GO" id="GO:0035810">
    <property type="term" value="P:positive regulation of urine volume"/>
    <property type="evidence" value="ECO:0007669"/>
    <property type="project" value="Ensembl"/>
</dbReference>
<dbReference type="GO" id="GO:1904707">
    <property type="term" value="P:positive regulation of vascular associated smooth muscle cell proliferation"/>
    <property type="evidence" value="ECO:0007669"/>
    <property type="project" value="Ensembl"/>
</dbReference>
<dbReference type="GO" id="GO:0001516">
    <property type="term" value="P:prostaglandin biosynthetic process"/>
    <property type="evidence" value="ECO:0000314"/>
    <property type="project" value="BHF-UCL"/>
</dbReference>
<dbReference type="GO" id="GO:0010827">
    <property type="term" value="P:regulation of D-glucose transmembrane transport"/>
    <property type="evidence" value="ECO:0007669"/>
    <property type="project" value="Ensembl"/>
</dbReference>
<dbReference type="GO" id="GO:0006885">
    <property type="term" value="P:regulation of pH"/>
    <property type="evidence" value="ECO:0007669"/>
    <property type="project" value="Ensembl"/>
</dbReference>
<dbReference type="GO" id="GO:0003100">
    <property type="term" value="P:regulation of systemic arterial blood pressure by endothelin"/>
    <property type="evidence" value="ECO:0000314"/>
    <property type="project" value="BHF-UCL"/>
</dbReference>
<dbReference type="GO" id="GO:0019229">
    <property type="term" value="P:regulation of vasoconstriction"/>
    <property type="evidence" value="ECO:0007669"/>
    <property type="project" value="InterPro"/>
</dbReference>
<dbReference type="GO" id="GO:0070294">
    <property type="term" value="P:renal sodium ion absorption"/>
    <property type="evidence" value="ECO:0007669"/>
    <property type="project" value="Ensembl"/>
</dbReference>
<dbReference type="GO" id="GO:0007585">
    <property type="term" value="P:respiratory gaseous exchange by respiratory system"/>
    <property type="evidence" value="ECO:0007669"/>
    <property type="project" value="Ensembl"/>
</dbReference>
<dbReference type="GO" id="GO:0014823">
    <property type="term" value="P:response to activity"/>
    <property type="evidence" value="ECO:0007669"/>
    <property type="project" value="Ensembl"/>
</dbReference>
<dbReference type="GO" id="GO:0043200">
    <property type="term" value="P:response to amino acid"/>
    <property type="evidence" value="ECO:0007669"/>
    <property type="project" value="Ensembl"/>
</dbReference>
<dbReference type="GO" id="GO:0001975">
    <property type="term" value="P:response to amphetamine"/>
    <property type="evidence" value="ECO:0007669"/>
    <property type="project" value="Ensembl"/>
</dbReference>
<dbReference type="GO" id="GO:0071548">
    <property type="term" value="P:response to dexamethasone"/>
    <property type="evidence" value="ECO:0007669"/>
    <property type="project" value="Ensembl"/>
</dbReference>
<dbReference type="GO" id="GO:0044321">
    <property type="term" value="P:response to leptin"/>
    <property type="evidence" value="ECO:0007669"/>
    <property type="project" value="Ensembl"/>
</dbReference>
<dbReference type="GO" id="GO:0032496">
    <property type="term" value="P:response to lipopolysaccharide"/>
    <property type="evidence" value="ECO:0007669"/>
    <property type="project" value="Ensembl"/>
</dbReference>
<dbReference type="GO" id="GO:0035994">
    <property type="term" value="P:response to muscle stretch"/>
    <property type="evidence" value="ECO:0007669"/>
    <property type="project" value="Ensembl"/>
</dbReference>
<dbReference type="GO" id="GO:0035094">
    <property type="term" value="P:response to nicotine"/>
    <property type="evidence" value="ECO:0007669"/>
    <property type="project" value="Ensembl"/>
</dbReference>
<dbReference type="GO" id="GO:0010193">
    <property type="term" value="P:response to ozone"/>
    <property type="evidence" value="ECO:0007669"/>
    <property type="project" value="Ensembl"/>
</dbReference>
<dbReference type="GO" id="GO:0034696">
    <property type="term" value="P:response to prostaglandin F"/>
    <property type="evidence" value="ECO:0007669"/>
    <property type="project" value="Ensembl"/>
</dbReference>
<dbReference type="GO" id="GO:1902074">
    <property type="term" value="P:response to salt"/>
    <property type="evidence" value="ECO:0007669"/>
    <property type="project" value="Ensembl"/>
</dbReference>
<dbReference type="GO" id="GO:0033574">
    <property type="term" value="P:response to testosterone"/>
    <property type="evidence" value="ECO:0007669"/>
    <property type="project" value="Ensembl"/>
</dbReference>
<dbReference type="GO" id="GO:0043179">
    <property type="term" value="P:rhythmic excitation"/>
    <property type="evidence" value="ECO:0007669"/>
    <property type="project" value="Ensembl"/>
</dbReference>
<dbReference type="GO" id="GO:1902287">
    <property type="term" value="P:semaphorin-plexin signaling pathway involved in axon guidance"/>
    <property type="evidence" value="ECO:0007669"/>
    <property type="project" value="Ensembl"/>
</dbReference>
<dbReference type="GO" id="GO:0023019">
    <property type="term" value="P:signal transduction involved in regulation of gene expression"/>
    <property type="evidence" value="ECO:0000314"/>
    <property type="project" value="BHF-UCL"/>
</dbReference>
<dbReference type="GO" id="GO:0042554">
    <property type="term" value="P:superoxide anion generation"/>
    <property type="evidence" value="ECO:0007669"/>
    <property type="project" value="Ensembl"/>
</dbReference>
<dbReference type="GO" id="GO:0097492">
    <property type="term" value="P:sympathetic neuron axon guidance"/>
    <property type="evidence" value="ECO:0007669"/>
    <property type="project" value="Ensembl"/>
</dbReference>
<dbReference type="GO" id="GO:0030878">
    <property type="term" value="P:thyroid gland development"/>
    <property type="evidence" value="ECO:0007669"/>
    <property type="project" value="Ensembl"/>
</dbReference>
<dbReference type="GO" id="GO:0006366">
    <property type="term" value="P:transcription by RNA polymerase II"/>
    <property type="evidence" value="ECO:0007669"/>
    <property type="project" value="Ensembl"/>
</dbReference>
<dbReference type="GO" id="GO:0042310">
    <property type="term" value="P:vasoconstriction"/>
    <property type="evidence" value="ECO:0000314"/>
    <property type="project" value="BHF-UCL"/>
</dbReference>
<dbReference type="GO" id="GO:0014826">
    <property type="term" value="P:vein smooth muscle contraction"/>
    <property type="evidence" value="ECO:0000314"/>
    <property type="project" value="BHF-UCL"/>
</dbReference>
<dbReference type="InterPro" id="IPR020475">
    <property type="entry name" value="Endothelin"/>
</dbReference>
<dbReference type="InterPro" id="IPR019764">
    <property type="entry name" value="Endothelin_toxin_CS"/>
</dbReference>
<dbReference type="InterPro" id="IPR001928">
    <property type="entry name" value="Endothln-like_toxin"/>
</dbReference>
<dbReference type="PANTHER" id="PTHR13874">
    <property type="entry name" value="ENDOTHELIN"/>
    <property type="match status" value="1"/>
</dbReference>
<dbReference type="PANTHER" id="PTHR13874:SF10">
    <property type="entry name" value="ENDOTHELIN-1"/>
    <property type="match status" value="1"/>
</dbReference>
<dbReference type="Pfam" id="PF00322">
    <property type="entry name" value="Endothelin"/>
    <property type="match status" value="1"/>
</dbReference>
<dbReference type="PRINTS" id="PR00365">
    <property type="entry name" value="ENDOTHELIN"/>
</dbReference>
<dbReference type="SMART" id="SM00272">
    <property type="entry name" value="END"/>
    <property type="match status" value="2"/>
</dbReference>
<dbReference type="PROSITE" id="PS00270">
    <property type="entry name" value="ENDOTHELIN"/>
    <property type="match status" value="2"/>
</dbReference>
<evidence type="ECO:0000250" key="1">
    <source>
        <dbReference type="UniProtKB" id="P09558"/>
    </source>
</evidence>
<evidence type="ECO:0000250" key="2">
    <source>
        <dbReference type="UniProtKB" id="P22387"/>
    </source>
</evidence>
<evidence type="ECO:0000256" key="3">
    <source>
        <dbReference type="SAM" id="MobiDB-lite"/>
    </source>
</evidence>
<evidence type="ECO:0000269" key="4">
    <source>
    </source>
</evidence>
<evidence type="ECO:0000269" key="5">
    <source>
    </source>
</evidence>
<evidence type="ECO:0000269" key="6">
    <source>
    </source>
</evidence>
<evidence type="ECO:0000269" key="7">
    <source>
    </source>
</evidence>
<evidence type="ECO:0000269" key="8">
    <source>
    </source>
</evidence>
<evidence type="ECO:0000269" key="9">
    <source>
    </source>
</evidence>
<evidence type="ECO:0000269" key="10">
    <source>
    </source>
</evidence>
<evidence type="ECO:0000269" key="11">
    <source>
    </source>
</evidence>
<evidence type="ECO:0000269" key="12">
    <source>
    </source>
</evidence>
<evidence type="ECO:0000269" key="13">
    <source>
    </source>
</evidence>
<evidence type="ECO:0000269" key="14">
    <source>
    </source>
</evidence>
<evidence type="ECO:0000269" key="15">
    <source>
    </source>
</evidence>
<evidence type="ECO:0000269" key="16">
    <source ref="5"/>
</evidence>
<evidence type="ECO:0000305" key="17"/>
<evidence type="ECO:0007829" key="18">
    <source>
        <dbReference type="PDB" id="1EDN"/>
    </source>
</evidence>
<evidence type="ECO:0007829" key="19">
    <source>
        <dbReference type="PDB" id="1T7H"/>
    </source>
</evidence>
<comment type="function">
    <text evidence="1 2 9 12">Endothelins are endothelium-derived vasoconstrictor peptides (By similarity). Probable ligand for G-protein coupled receptors EDNRA and EDNRB which activates PTK2B, BCAR1, BCAR3 and, GTPases RAP1 and RHOA cascade in glomerular mesangial cells (PubMed:19086031). Also binds the DEAR/FBXW7-AS1 receptor (PubMed:17446437). Promotes mesenteric arterial wall remodeling via activation of ROCK signaling and subsequent colocalization of NFATC3 with F-actin filaments (By similarity). NFATC3 then translocates to the nucleus where it subsequently promotes the transcription of the smooth muscle hypertrophy and differentiation marker ACTA2 (By similarity).</text>
</comment>
<comment type="interaction">
    <interactant intactId="EBI-715181">
        <id>P05305</id>
    </interactant>
    <interactant intactId="EBI-6624559">
        <id>P25101</id>
        <label>EDNRA</label>
    </interactant>
    <organismsDiffer>false</organismsDiffer>
    <experiments>2</experiments>
</comment>
<comment type="interaction">
    <interactant intactId="EBI-715181">
        <id>P05305</id>
    </interactant>
    <interactant intactId="EBI-6624656">
        <id>P24530</id>
        <label>EDNRB</label>
    </interactant>
    <organismsDiffer>false</organismsDiffer>
    <experiments>2</experiments>
</comment>
<comment type="subcellular location">
    <subcellularLocation>
        <location>Secreted</location>
    </subcellularLocation>
</comment>
<comment type="tissue specificity">
    <text evidence="15">Expressed in lung, placental stem villi vessels and in cultured placental vascular smooth muscle cells.</text>
</comment>
<comment type="disease" evidence="13">
    <disease id="DI-04053">
        <name>Question mark ears, isolated</name>
        <acronym>QME</acronym>
        <description>An auricular abnormality characterized by a cleft between the lobule and the lower part of the helix, sometimes accompanied by a prominent or deficient upper part of the helix, shallow skin dimple on the posterior surface of the ear, or transposition of the ear lobe/antitragus.</description>
        <dbReference type="MIM" id="612798"/>
    </disease>
    <text>The disease is caused by variants affecting the gene represented in this entry.</text>
</comment>
<comment type="disease" evidence="13">
    <disease id="DI-04052">
        <name>Auriculocondylar syndrome 3</name>
        <acronym>ARCND3</acronym>
        <description>An autosomal recessive form of auriculocondylar syndrome, a craniofacial malformation syndrome characterized by variable mandibular anomalies, including mild to severe micrognathia, temporomandibular joint ankylosis, cleft palate, and a characteristic ear malformation that consists of separation of the lobule from the external ear, giving the appearance of a question mark (question-mark ear). Other frequently described features include prominent cheeks, cupped and posteriorly rotated ears, preauricular tags, and microstomia. Glossoptosis, masticatory abnormalities, orthodontic problems, and malocclusion occur in a majority of affected subjects.</description>
        <dbReference type="MIM" id="615706"/>
    </disease>
    <text>The disease is caused by variants affecting the gene represented in this entry.</text>
</comment>
<comment type="similarity">
    <text evidence="17">Belongs to the endothelin/sarafotoxin family.</text>
</comment>
<comment type="online information" name="Wikipedia">
    <link uri="https://en.wikipedia.org/wiki/Endothelin"/>
    <text>Endothelin entry</text>
</comment>
<proteinExistence type="evidence at protein level"/>
<organism>
    <name type="scientific">Homo sapiens</name>
    <name type="common">Human</name>
    <dbReference type="NCBI Taxonomy" id="9606"/>
    <lineage>
        <taxon>Eukaryota</taxon>
        <taxon>Metazoa</taxon>
        <taxon>Chordata</taxon>
        <taxon>Craniata</taxon>
        <taxon>Vertebrata</taxon>
        <taxon>Euteleostomi</taxon>
        <taxon>Mammalia</taxon>
        <taxon>Eutheria</taxon>
        <taxon>Euarchontoglires</taxon>
        <taxon>Primates</taxon>
        <taxon>Haplorrhini</taxon>
        <taxon>Catarrhini</taxon>
        <taxon>Hominidae</taxon>
        <taxon>Homo</taxon>
    </lineage>
</organism>
<sequence>MDYLLMIFSLLFVACQGAPETAVLGAELSAVGENGGEKPTPSPPWRLRRSKRCSCSSLMDKECVYFCHLDIIWVNTPEHVVPYGLGSPRSKRALENLLPTKATDRENRCQCASQKDKKCWNFCQAGKELRAEDIMEKDWNNHKKGKDCSKLGKKCIYQQLVRGRKIRRSSEEHLRQTRSETMRNSVKSSFHDPKLKGKPSRERYVTHNRAHW</sequence>
<accession>P05305</accession>
<accession>Q96DA1</accession>
<name>EDN1_HUMAN</name>